<reference key="1">
    <citation type="submission" date="2009-05" db="EMBL/GenBank/DDBJ databases">
        <title>Complete sequence of Tolumonas auensis DSM 9187.</title>
        <authorList>
            <consortium name="US DOE Joint Genome Institute"/>
            <person name="Lucas S."/>
            <person name="Copeland A."/>
            <person name="Lapidus A."/>
            <person name="Glavina del Rio T."/>
            <person name="Tice H."/>
            <person name="Bruce D."/>
            <person name="Goodwin L."/>
            <person name="Pitluck S."/>
            <person name="Chertkov O."/>
            <person name="Brettin T."/>
            <person name="Detter J.C."/>
            <person name="Han C."/>
            <person name="Larimer F."/>
            <person name="Land M."/>
            <person name="Hauser L."/>
            <person name="Kyrpides N."/>
            <person name="Mikhailova N."/>
            <person name="Spring S."/>
            <person name="Beller H."/>
        </authorList>
    </citation>
    <scope>NUCLEOTIDE SEQUENCE [LARGE SCALE GENOMIC DNA]</scope>
    <source>
        <strain>DSM 9187 / NBRC 110442 / TA 4</strain>
    </source>
</reference>
<sequence>MTLGLVGRKLGMTRVFTEDGVSIPVTVIEVEANRVTQLKTLETDGYTAVQVTTGVKKASRLTKAEAGHFAKAEVEAGRGLWEFRLNDGEGADLTVGSELKVDIFADVKKADVTGISKGKGFAGVVKRWNFRTQDMTHGNSRSHRVPGSIGQNQSPGKVFKGKKMAGHLGCERVTVQSLDIVRVDVERNLLLIKGAVPGATNGDVIVKPAVKA</sequence>
<feature type="chain" id="PRO_1000214530" description="Large ribosomal subunit protein uL3">
    <location>
        <begin position="1"/>
        <end position="212"/>
    </location>
</feature>
<feature type="region of interest" description="Disordered" evidence="2">
    <location>
        <begin position="135"/>
        <end position="156"/>
    </location>
</feature>
<feature type="modified residue" description="N5-methylglutamine" evidence="1">
    <location>
        <position position="153"/>
    </location>
</feature>
<comment type="function">
    <text evidence="1">One of the primary rRNA binding proteins, it binds directly near the 3'-end of the 23S rRNA, where it nucleates assembly of the 50S subunit.</text>
</comment>
<comment type="subunit">
    <text evidence="1">Part of the 50S ribosomal subunit. Forms a cluster with proteins L14 and L19.</text>
</comment>
<comment type="PTM">
    <text evidence="1">Methylated by PrmB.</text>
</comment>
<comment type="similarity">
    <text evidence="1">Belongs to the universal ribosomal protein uL3 family.</text>
</comment>
<evidence type="ECO:0000255" key="1">
    <source>
        <dbReference type="HAMAP-Rule" id="MF_01325"/>
    </source>
</evidence>
<evidence type="ECO:0000256" key="2">
    <source>
        <dbReference type="SAM" id="MobiDB-lite"/>
    </source>
</evidence>
<evidence type="ECO:0000305" key="3"/>
<protein>
    <recommendedName>
        <fullName evidence="1">Large ribosomal subunit protein uL3</fullName>
    </recommendedName>
    <alternativeName>
        <fullName evidence="3">50S ribosomal protein L3</fullName>
    </alternativeName>
</protein>
<dbReference type="EMBL" id="CP001616">
    <property type="protein sequence ID" value="ACQ91729.1"/>
    <property type="molecule type" value="Genomic_DNA"/>
</dbReference>
<dbReference type="RefSeq" id="WP_012728328.1">
    <property type="nucleotide sequence ID" value="NC_012691.1"/>
</dbReference>
<dbReference type="SMR" id="C4L7T0"/>
<dbReference type="STRING" id="595494.Tola_0099"/>
<dbReference type="KEGG" id="tau:Tola_0099"/>
<dbReference type="eggNOG" id="COG0087">
    <property type="taxonomic scope" value="Bacteria"/>
</dbReference>
<dbReference type="HOGENOM" id="CLU_044142_4_1_6"/>
<dbReference type="OrthoDB" id="9806135at2"/>
<dbReference type="Proteomes" id="UP000009073">
    <property type="component" value="Chromosome"/>
</dbReference>
<dbReference type="GO" id="GO:0022625">
    <property type="term" value="C:cytosolic large ribosomal subunit"/>
    <property type="evidence" value="ECO:0007669"/>
    <property type="project" value="TreeGrafter"/>
</dbReference>
<dbReference type="GO" id="GO:0019843">
    <property type="term" value="F:rRNA binding"/>
    <property type="evidence" value="ECO:0007669"/>
    <property type="project" value="UniProtKB-UniRule"/>
</dbReference>
<dbReference type="GO" id="GO:0003735">
    <property type="term" value="F:structural constituent of ribosome"/>
    <property type="evidence" value="ECO:0007669"/>
    <property type="project" value="InterPro"/>
</dbReference>
<dbReference type="GO" id="GO:0006412">
    <property type="term" value="P:translation"/>
    <property type="evidence" value="ECO:0007669"/>
    <property type="project" value="UniProtKB-UniRule"/>
</dbReference>
<dbReference type="FunFam" id="2.40.30.10:FF:000004">
    <property type="entry name" value="50S ribosomal protein L3"/>
    <property type="match status" value="1"/>
</dbReference>
<dbReference type="FunFam" id="3.30.160.810:FF:000001">
    <property type="entry name" value="50S ribosomal protein L3"/>
    <property type="match status" value="1"/>
</dbReference>
<dbReference type="Gene3D" id="3.30.160.810">
    <property type="match status" value="1"/>
</dbReference>
<dbReference type="Gene3D" id="2.40.30.10">
    <property type="entry name" value="Translation factors"/>
    <property type="match status" value="1"/>
</dbReference>
<dbReference type="HAMAP" id="MF_01325_B">
    <property type="entry name" value="Ribosomal_uL3_B"/>
    <property type="match status" value="1"/>
</dbReference>
<dbReference type="InterPro" id="IPR000597">
    <property type="entry name" value="Ribosomal_uL3"/>
</dbReference>
<dbReference type="InterPro" id="IPR019927">
    <property type="entry name" value="Ribosomal_uL3_bac/org-type"/>
</dbReference>
<dbReference type="InterPro" id="IPR019926">
    <property type="entry name" value="Ribosomal_uL3_CS"/>
</dbReference>
<dbReference type="InterPro" id="IPR009000">
    <property type="entry name" value="Transl_B-barrel_sf"/>
</dbReference>
<dbReference type="NCBIfam" id="TIGR03625">
    <property type="entry name" value="L3_bact"/>
    <property type="match status" value="1"/>
</dbReference>
<dbReference type="PANTHER" id="PTHR11229">
    <property type="entry name" value="50S RIBOSOMAL PROTEIN L3"/>
    <property type="match status" value="1"/>
</dbReference>
<dbReference type="PANTHER" id="PTHR11229:SF16">
    <property type="entry name" value="LARGE RIBOSOMAL SUBUNIT PROTEIN UL3C"/>
    <property type="match status" value="1"/>
</dbReference>
<dbReference type="Pfam" id="PF00297">
    <property type="entry name" value="Ribosomal_L3"/>
    <property type="match status" value="1"/>
</dbReference>
<dbReference type="SUPFAM" id="SSF50447">
    <property type="entry name" value="Translation proteins"/>
    <property type="match status" value="1"/>
</dbReference>
<dbReference type="PROSITE" id="PS00474">
    <property type="entry name" value="RIBOSOMAL_L3"/>
    <property type="match status" value="1"/>
</dbReference>
<accession>C4L7T0</accession>
<proteinExistence type="inferred from homology"/>
<organism>
    <name type="scientific">Tolumonas auensis (strain DSM 9187 / NBRC 110442 / TA 4)</name>
    <dbReference type="NCBI Taxonomy" id="595494"/>
    <lineage>
        <taxon>Bacteria</taxon>
        <taxon>Pseudomonadati</taxon>
        <taxon>Pseudomonadota</taxon>
        <taxon>Gammaproteobacteria</taxon>
        <taxon>Aeromonadales</taxon>
        <taxon>Aeromonadaceae</taxon>
        <taxon>Tolumonas</taxon>
    </lineage>
</organism>
<gene>
    <name evidence="1" type="primary">rplC</name>
    <name type="ordered locus">Tola_0099</name>
</gene>
<keyword id="KW-0488">Methylation</keyword>
<keyword id="KW-1185">Reference proteome</keyword>
<keyword id="KW-0687">Ribonucleoprotein</keyword>
<keyword id="KW-0689">Ribosomal protein</keyword>
<keyword id="KW-0694">RNA-binding</keyword>
<keyword id="KW-0699">rRNA-binding</keyword>
<name>RL3_TOLAT</name>